<protein>
    <recommendedName>
        <fullName>Probable ATP synthase subunit g 1, mitochondrial</fullName>
        <shortName>ATPase subunit g 1</shortName>
    </recommendedName>
</protein>
<dbReference type="EMBL" id="BX284601">
    <property type="protein sequence ID" value="CAB03179.1"/>
    <property type="molecule type" value="Genomic_DNA"/>
</dbReference>
<dbReference type="PIR" id="T23392">
    <property type="entry name" value="T23392"/>
</dbReference>
<dbReference type="RefSeq" id="NP_492352.1">
    <property type="nucleotide sequence ID" value="NM_059951.8"/>
</dbReference>
<dbReference type="SMR" id="P90921"/>
<dbReference type="BioGRID" id="38106">
    <property type="interactions" value="46"/>
</dbReference>
<dbReference type="FunCoup" id="P90921">
    <property type="interactions" value="706"/>
</dbReference>
<dbReference type="STRING" id="6239.K07A12.3.1"/>
<dbReference type="PaxDb" id="6239-K07A12.3"/>
<dbReference type="PeptideAtlas" id="P90921"/>
<dbReference type="EnsemblMetazoa" id="K07A12.3.1">
    <property type="protein sequence ID" value="K07A12.3.1"/>
    <property type="gene ID" value="WBGene00000209"/>
</dbReference>
<dbReference type="GeneID" id="172673"/>
<dbReference type="KEGG" id="cel:CELE_K07A12.3"/>
<dbReference type="UCSC" id="K07A12.3.1">
    <property type="organism name" value="c. elegans"/>
</dbReference>
<dbReference type="AGR" id="WB:WBGene00000209"/>
<dbReference type="CTD" id="172673"/>
<dbReference type="WormBase" id="K07A12.3">
    <property type="protein sequence ID" value="CE11868"/>
    <property type="gene ID" value="WBGene00000209"/>
    <property type="gene designation" value="asg-1"/>
</dbReference>
<dbReference type="eggNOG" id="KOG4103">
    <property type="taxonomic scope" value="Eukaryota"/>
</dbReference>
<dbReference type="GeneTree" id="ENSGT00390000009724"/>
<dbReference type="HOGENOM" id="CLU_152793_1_0_1"/>
<dbReference type="InParanoid" id="P90921"/>
<dbReference type="OMA" id="CWHKELK"/>
<dbReference type="OrthoDB" id="437at2759"/>
<dbReference type="PhylomeDB" id="P90921"/>
<dbReference type="PRO" id="PR:P90921"/>
<dbReference type="Proteomes" id="UP000001940">
    <property type="component" value="Chromosome I"/>
</dbReference>
<dbReference type="Bgee" id="WBGene00000209">
    <property type="expression patterns" value="Expressed in germ line (C elegans) and 4 other cell types or tissues"/>
</dbReference>
<dbReference type="GO" id="GO:0031966">
    <property type="term" value="C:mitochondrial membrane"/>
    <property type="evidence" value="ECO:0007669"/>
    <property type="project" value="UniProtKB-SubCell"/>
</dbReference>
<dbReference type="GO" id="GO:0045259">
    <property type="term" value="C:proton-transporting ATP synthase complex"/>
    <property type="evidence" value="ECO:0007669"/>
    <property type="project" value="UniProtKB-KW"/>
</dbReference>
<dbReference type="GO" id="GO:0015078">
    <property type="term" value="F:proton transmembrane transporter activity"/>
    <property type="evidence" value="ECO:0007669"/>
    <property type="project" value="InterPro"/>
</dbReference>
<dbReference type="GO" id="GO:0015986">
    <property type="term" value="P:proton motive force-driven ATP synthesis"/>
    <property type="evidence" value="ECO:0000318"/>
    <property type="project" value="GO_Central"/>
</dbReference>
<dbReference type="InterPro" id="IPR006808">
    <property type="entry name" value="ATP_synth_F0_gsu_mt"/>
</dbReference>
<dbReference type="InterPro" id="IPR016702">
    <property type="entry name" value="ATP_synth_su_G_mt_met"/>
</dbReference>
<dbReference type="PANTHER" id="PTHR12386">
    <property type="entry name" value="ATP SYNTHASE SUBUNIT"/>
    <property type="match status" value="1"/>
</dbReference>
<dbReference type="Pfam" id="PF04718">
    <property type="entry name" value="ATP-synt_G"/>
    <property type="match status" value="1"/>
</dbReference>
<dbReference type="PIRSF" id="PIRSF017835">
    <property type="entry name" value="ATP-synth_g_mitoch_animal"/>
    <property type="match status" value="1"/>
</dbReference>
<reference key="1">
    <citation type="journal article" date="1998" name="Science">
        <title>Genome sequence of the nematode C. elegans: a platform for investigating biology.</title>
        <authorList>
            <consortium name="The C. elegans sequencing consortium"/>
        </authorList>
    </citation>
    <scope>NUCLEOTIDE SEQUENCE [LARGE SCALE GENOMIC DNA]</scope>
    <source>
        <strain>Bristol N2</strain>
    </source>
</reference>
<sequence>MATHKLSFFEKLANTFGALYRHQAQQFPRRLAILKAVGKHELAPPRSADIPAIKADWAKLQKFIETKQYVNLSIKESLVYSAVALEVVFWFFVGEMIGRRYIFGYIVPANYVSKDTKAKVAEKKRLAALEA</sequence>
<name>ATPL1_CAEEL</name>
<keyword id="KW-0066">ATP synthesis</keyword>
<keyword id="KW-0138">CF(0)</keyword>
<keyword id="KW-0375">Hydrogen ion transport</keyword>
<keyword id="KW-0406">Ion transport</keyword>
<keyword id="KW-0472">Membrane</keyword>
<keyword id="KW-0496">Mitochondrion</keyword>
<keyword id="KW-1185">Reference proteome</keyword>
<keyword id="KW-0813">Transport</keyword>
<accession>P90921</accession>
<organism>
    <name type="scientific">Caenorhabditis elegans</name>
    <dbReference type="NCBI Taxonomy" id="6239"/>
    <lineage>
        <taxon>Eukaryota</taxon>
        <taxon>Metazoa</taxon>
        <taxon>Ecdysozoa</taxon>
        <taxon>Nematoda</taxon>
        <taxon>Chromadorea</taxon>
        <taxon>Rhabditida</taxon>
        <taxon>Rhabditina</taxon>
        <taxon>Rhabditomorpha</taxon>
        <taxon>Rhabditoidea</taxon>
        <taxon>Rhabditidae</taxon>
        <taxon>Peloderinae</taxon>
        <taxon>Caenorhabditis</taxon>
    </lineage>
</organism>
<proteinExistence type="inferred from homology"/>
<gene>
    <name evidence="3" type="primary">asg-1</name>
    <name evidence="3" type="ORF">K07A12.3</name>
</gene>
<feature type="chain" id="PRO_0000071695" description="Probable ATP synthase subunit g 1, mitochondrial">
    <location>
        <begin position="1"/>
        <end position="131"/>
    </location>
</feature>
<comment type="function">
    <text evidence="1">Mitochondrial membrane ATP synthase (F(1)F(0) ATP synthase or Complex V) produces ATP from ADP in the presence of a proton gradient across the membrane which is generated by electron transport complexes of the respiratory chain. F-type ATPases consist of two structural domains, F(1) - containing the extramembraneous catalytic core, and F(0) - containing the membrane proton channel, linked together by a central stalk and a peripheral stalk. During catalysis, ATP synthesis in the catalytic domain of F(1) is coupled via a rotary mechanism of the central stalk subunits to proton translocation. Part of the complex F(0) domain. Minor subunit located with subunit a in the membrane (By similarity).</text>
</comment>
<comment type="subunit">
    <text evidence="2">Subunit of the F-type ATPase which has 2 components, CF(1) - the catalytic core - and CF(0) - the membrane proton channel.</text>
</comment>
<comment type="subcellular location">
    <subcellularLocation>
        <location evidence="1">Mitochondrion membrane</location>
    </subcellularLocation>
</comment>
<comment type="similarity">
    <text evidence="2">Belongs to the ATPase g subunit family.</text>
</comment>
<evidence type="ECO:0000250" key="1"/>
<evidence type="ECO:0000305" key="2"/>
<evidence type="ECO:0000312" key="3">
    <source>
        <dbReference type="WormBase" id="K07A12.3"/>
    </source>
</evidence>